<feature type="chain" id="PRO_1000087467" description="tRNA N6-adenosine threonylcarbamoyltransferase">
    <location>
        <begin position="1"/>
        <end position="364"/>
    </location>
</feature>
<feature type="binding site" evidence="1">
    <location>
        <position position="115"/>
    </location>
    <ligand>
        <name>Fe cation</name>
        <dbReference type="ChEBI" id="CHEBI:24875"/>
    </ligand>
</feature>
<feature type="binding site" evidence="1">
    <location>
        <position position="119"/>
    </location>
    <ligand>
        <name>Fe cation</name>
        <dbReference type="ChEBI" id="CHEBI:24875"/>
    </ligand>
</feature>
<feature type="binding site" evidence="1">
    <location>
        <begin position="137"/>
        <end position="141"/>
    </location>
    <ligand>
        <name>substrate</name>
    </ligand>
</feature>
<feature type="binding site" evidence="1">
    <location>
        <position position="170"/>
    </location>
    <ligand>
        <name>substrate</name>
    </ligand>
</feature>
<feature type="binding site" evidence="1">
    <location>
        <position position="183"/>
    </location>
    <ligand>
        <name>substrate</name>
    </ligand>
</feature>
<feature type="binding site" evidence="1">
    <location>
        <position position="288"/>
    </location>
    <ligand>
        <name>substrate</name>
    </ligand>
</feature>
<feature type="binding site" evidence="1">
    <location>
        <position position="316"/>
    </location>
    <ligand>
        <name>Fe cation</name>
        <dbReference type="ChEBI" id="CHEBI:24875"/>
    </ligand>
</feature>
<dbReference type="EC" id="2.3.1.234" evidence="1"/>
<dbReference type="EMBL" id="AM260525">
    <property type="protein sequence ID" value="CAK02538.1"/>
    <property type="molecule type" value="Genomic_DNA"/>
</dbReference>
<dbReference type="RefSeq" id="WP_012232572.1">
    <property type="nucleotide sequence ID" value="NC_010161.1"/>
</dbReference>
<dbReference type="SMR" id="A9IZF6"/>
<dbReference type="KEGG" id="btr:BT_2585"/>
<dbReference type="eggNOG" id="COG0533">
    <property type="taxonomic scope" value="Bacteria"/>
</dbReference>
<dbReference type="HOGENOM" id="CLU_023208_0_2_5"/>
<dbReference type="Proteomes" id="UP000001592">
    <property type="component" value="Chromosome"/>
</dbReference>
<dbReference type="GO" id="GO:0005737">
    <property type="term" value="C:cytoplasm"/>
    <property type="evidence" value="ECO:0007669"/>
    <property type="project" value="UniProtKB-SubCell"/>
</dbReference>
<dbReference type="GO" id="GO:0005506">
    <property type="term" value="F:iron ion binding"/>
    <property type="evidence" value="ECO:0007669"/>
    <property type="project" value="UniProtKB-UniRule"/>
</dbReference>
<dbReference type="GO" id="GO:0061711">
    <property type="term" value="F:N(6)-L-threonylcarbamoyladenine synthase activity"/>
    <property type="evidence" value="ECO:0007669"/>
    <property type="project" value="UniProtKB-EC"/>
</dbReference>
<dbReference type="GO" id="GO:0002949">
    <property type="term" value="P:tRNA threonylcarbamoyladenosine modification"/>
    <property type="evidence" value="ECO:0007669"/>
    <property type="project" value="UniProtKB-UniRule"/>
</dbReference>
<dbReference type="CDD" id="cd24133">
    <property type="entry name" value="ASKHA_NBD_TsaD_bac"/>
    <property type="match status" value="1"/>
</dbReference>
<dbReference type="FunFam" id="3.30.420.40:FF:000012">
    <property type="entry name" value="tRNA N6-adenosine threonylcarbamoyltransferase"/>
    <property type="match status" value="1"/>
</dbReference>
<dbReference type="Gene3D" id="3.30.420.40">
    <property type="match status" value="2"/>
</dbReference>
<dbReference type="HAMAP" id="MF_01445">
    <property type="entry name" value="TsaD"/>
    <property type="match status" value="1"/>
</dbReference>
<dbReference type="InterPro" id="IPR043129">
    <property type="entry name" value="ATPase_NBD"/>
</dbReference>
<dbReference type="InterPro" id="IPR000905">
    <property type="entry name" value="Gcp-like_dom"/>
</dbReference>
<dbReference type="InterPro" id="IPR017861">
    <property type="entry name" value="KAE1/TsaD"/>
</dbReference>
<dbReference type="InterPro" id="IPR022450">
    <property type="entry name" value="TsaD"/>
</dbReference>
<dbReference type="NCBIfam" id="TIGR00329">
    <property type="entry name" value="gcp_kae1"/>
    <property type="match status" value="1"/>
</dbReference>
<dbReference type="NCBIfam" id="TIGR03723">
    <property type="entry name" value="T6A_TsaD_YgjD"/>
    <property type="match status" value="1"/>
</dbReference>
<dbReference type="PANTHER" id="PTHR11735">
    <property type="entry name" value="TRNA N6-ADENOSINE THREONYLCARBAMOYLTRANSFERASE"/>
    <property type="match status" value="1"/>
</dbReference>
<dbReference type="PANTHER" id="PTHR11735:SF6">
    <property type="entry name" value="TRNA N6-ADENOSINE THREONYLCARBAMOYLTRANSFERASE, MITOCHONDRIAL"/>
    <property type="match status" value="1"/>
</dbReference>
<dbReference type="Pfam" id="PF00814">
    <property type="entry name" value="TsaD"/>
    <property type="match status" value="1"/>
</dbReference>
<dbReference type="PRINTS" id="PR00789">
    <property type="entry name" value="OSIALOPTASE"/>
</dbReference>
<dbReference type="SUPFAM" id="SSF53067">
    <property type="entry name" value="Actin-like ATPase domain"/>
    <property type="match status" value="2"/>
</dbReference>
<name>TSAD_BART1</name>
<keyword id="KW-0012">Acyltransferase</keyword>
<keyword id="KW-0963">Cytoplasm</keyword>
<keyword id="KW-0408">Iron</keyword>
<keyword id="KW-0479">Metal-binding</keyword>
<keyword id="KW-0808">Transferase</keyword>
<keyword id="KW-0819">tRNA processing</keyword>
<organism>
    <name type="scientific">Bartonella tribocorum (strain CIP 105476 / IBS 506)</name>
    <dbReference type="NCBI Taxonomy" id="382640"/>
    <lineage>
        <taxon>Bacteria</taxon>
        <taxon>Pseudomonadati</taxon>
        <taxon>Pseudomonadota</taxon>
        <taxon>Alphaproteobacteria</taxon>
        <taxon>Hyphomicrobiales</taxon>
        <taxon>Bartonellaceae</taxon>
        <taxon>Bartonella</taxon>
    </lineage>
</organism>
<comment type="function">
    <text evidence="1">Required for the formation of a threonylcarbamoyl group on adenosine at position 37 (t(6)A37) in tRNAs that read codons beginning with adenine. Is involved in the transfer of the threonylcarbamoyl moiety of threonylcarbamoyl-AMP (TC-AMP) to the N6 group of A37, together with TsaE and TsaB. TsaD likely plays a direct catalytic role in this reaction.</text>
</comment>
<comment type="catalytic activity">
    <reaction evidence="1">
        <text>L-threonylcarbamoyladenylate + adenosine(37) in tRNA = N(6)-L-threonylcarbamoyladenosine(37) in tRNA + AMP + H(+)</text>
        <dbReference type="Rhea" id="RHEA:37059"/>
        <dbReference type="Rhea" id="RHEA-COMP:10162"/>
        <dbReference type="Rhea" id="RHEA-COMP:10163"/>
        <dbReference type="ChEBI" id="CHEBI:15378"/>
        <dbReference type="ChEBI" id="CHEBI:73682"/>
        <dbReference type="ChEBI" id="CHEBI:74411"/>
        <dbReference type="ChEBI" id="CHEBI:74418"/>
        <dbReference type="ChEBI" id="CHEBI:456215"/>
        <dbReference type="EC" id="2.3.1.234"/>
    </reaction>
</comment>
<comment type="cofactor">
    <cofactor evidence="1">
        <name>Fe(2+)</name>
        <dbReference type="ChEBI" id="CHEBI:29033"/>
    </cofactor>
    <text evidence="1">Binds 1 Fe(2+) ion per subunit.</text>
</comment>
<comment type="subcellular location">
    <subcellularLocation>
        <location evidence="1">Cytoplasm</location>
    </subcellularLocation>
</comment>
<comment type="similarity">
    <text evidence="1">Belongs to the KAE1 / TsaD family.</text>
</comment>
<reference key="1">
    <citation type="journal article" date="2007" name="Nat. Genet.">
        <title>Genomic analysis of Bartonella identifies type IV secretion systems as host adaptability factors.</title>
        <authorList>
            <person name="Saenz H.L."/>
            <person name="Engel P."/>
            <person name="Stoeckli M.C."/>
            <person name="Lanz C."/>
            <person name="Raddatz G."/>
            <person name="Vayssier-Taussat M."/>
            <person name="Birtles R."/>
            <person name="Schuster S.C."/>
            <person name="Dehio C."/>
        </authorList>
    </citation>
    <scope>NUCLEOTIDE SEQUENCE [LARGE SCALE GENOMIC DNA]</scope>
    <source>
        <strain>CIP 105476 / IBS 506</strain>
    </source>
</reference>
<proteinExistence type="inferred from homology"/>
<gene>
    <name evidence="1" type="primary">tsaD</name>
    <name type="synonym">gcp</name>
    <name type="ordered locus">BT_2585</name>
</gene>
<evidence type="ECO:0000255" key="1">
    <source>
        <dbReference type="HAMAP-Rule" id="MF_01445"/>
    </source>
</evidence>
<protein>
    <recommendedName>
        <fullName evidence="1">tRNA N6-adenosine threonylcarbamoyltransferase</fullName>
        <ecNumber evidence="1">2.3.1.234</ecNumber>
    </recommendedName>
    <alternativeName>
        <fullName evidence="1">N6-L-threonylcarbamoyladenine synthase</fullName>
        <shortName evidence="1">t(6)A synthase</shortName>
    </alternativeName>
    <alternativeName>
        <fullName evidence="1">t(6)A37 threonylcarbamoyladenosine biosynthesis protein TsaD</fullName>
    </alternativeName>
    <alternativeName>
        <fullName evidence="1">tRNA threonylcarbamoyladenosine biosynthesis protein TsaD</fullName>
    </alternativeName>
</protein>
<sequence length="364" mass="38600">MRLLGIETSCDETAAAVIEYNNESSSRILSNIVWSQIDHHAPYGGVVPEIAARAHVEILDHLILQALTEANTKLKDIDGIAATSGPGLIGGLLVGVMSAKALSLATGKPFIAVNHLEGHALTAVLTHNVKFPYLLLLVSGGHTQTILVHGVGNYQRLGTTIDDALGEAFDKTAKLLGLPYPGGPALEKAALLGDKNRIPLPRPLKGEKRLDFSFSGLKTAVRQAATAIAPLTENDVADIAASFQAAVTDTVRDRVHLALQHFTHQYPLSHDQEKHSPALVVAGGVAANQALRSTLQELAHQHGFEFIAPPLSLCTDNAAMIAFAGAQKLAQGETSSLDIAPRSRWPLDEKAIPLIGMGRRGTKA</sequence>
<accession>A9IZF6</accession>